<feature type="signal peptide" evidence="3">
    <location>
        <begin position="1"/>
        <end position="18"/>
    </location>
</feature>
<feature type="chain" id="PRO_0000420995" description="Apolipoprotein E">
    <location>
        <begin position="19"/>
        <end position="320"/>
    </location>
</feature>
<feature type="repeat" description="1">
    <location>
        <begin position="82"/>
        <end position="103"/>
    </location>
</feature>
<feature type="repeat" description="2">
    <location>
        <begin position="104"/>
        <end position="125"/>
    </location>
</feature>
<feature type="repeat" description="3">
    <location>
        <begin position="126"/>
        <end position="147"/>
    </location>
</feature>
<feature type="repeat" description="4">
    <location>
        <begin position="148"/>
        <end position="169"/>
    </location>
</feature>
<feature type="repeat" description="5">
    <location>
        <begin position="170"/>
        <end position="191"/>
    </location>
</feature>
<feature type="repeat" description="6">
    <location>
        <begin position="192"/>
        <end position="213"/>
    </location>
</feature>
<feature type="repeat" description="7">
    <location>
        <begin position="214"/>
        <end position="236"/>
    </location>
</feature>
<feature type="repeat" description="8">
    <location>
        <begin position="237"/>
        <end position="258"/>
    </location>
</feature>
<feature type="region of interest" description="8 X 22 AA approximate tandem repeats">
    <location>
        <begin position="82"/>
        <end position="199"/>
    </location>
</feature>
<feature type="region of interest" description="LDL and other lipoprotein receptors binding" evidence="1">
    <location>
        <begin position="160"/>
        <end position="170"/>
    </location>
</feature>
<feature type="region of interest" description="Lipid-binding and lipoprotein association" evidence="1">
    <location>
        <begin position="212"/>
        <end position="293"/>
    </location>
</feature>
<feature type="region of interest" description="Homooligomerization" evidence="1">
    <location>
        <begin position="269"/>
        <end position="320"/>
    </location>
</feature>
<feature type="region of interest" description="Specificity for association with VLDL" evidence="1">
    <location>
        <begin position="281"/>
        <end position="293"/>
    </location>
</feature>
<feature type="binding site" evidence="1">
    <location>
        <begin position="164"/>
        <end position="167"/>
    </location>
    <ligand>
        <name>heparin</name>
        <dbReference type="ChEBI" id="CHEBI:28304"/>
    </ligand>
</feature>
<feature type="binding site" evidence="1">
    <location>
        <begin position="232"/>
        <end position="239"/>
    </location>
    <ligand>
        <name>heparin</name>
        <dbReference type="ChEBI" id="CHEBI:28304"/>
    </ligand>
</feature>
<feature type="modified residue" description="Methionine sulfoxide" evidence="2">
    <location>
        <position position="145"/>
    </location>
</feature>
<feature type="modified residue" description="Phosphoserine" evidence="1">
    <location>
        <position position="149"/>
    </location>
</feature>
<evidence type="ECO:0000250" key="1">
    <source>
        <dbReference type="UniProtKB" id="P02649"/>
    </source>
</evidence>
<evidence type="ECO:0000250" key="2">
    <source>
        <dbReference type="UniProtKB" id="P08226"/>
    </source>
</evidence>
<evidence type="ECO:0000255" key="3"/>
<evidence type="ECO:0000305" key="4"/>
<name>APOE_SAIBB</name>
<protein>
    <recommendedName>
        <fullName>Apolipoprotein E</fullName>
        <shortName>Apo-E</shortName>
    </recommendedName>
</protein>
<comment type="function">
    <text evidence="1">APOE is an apolipoprotein, a protein associating with lipid particles, that mainly functions in lipoprotein-mediated lipid transport between organs via the plasma and interstitial fluids. APOE is a core component of plasma lipoproteins and is involved in their production, conversion and clearance. Apolipoproteins are amphipathic molecules that interact both with lipids of the lipoprotein particle core and the aqueous environment of the plasma. As such, APOE associates with chylomicrons, chylomicron remnants, very low density lipoproteins (VLDL) and intermediate density lipoproteins (IDL) but shows a preferential binding to high-density lipoproteins (HDL). It also binds a wide range of cellular receptors including the LDL receptor/LDLR, the LDL receptor-related proteins LRP1, LRP2 and LRP8 and the very low-density lipoprotein receptor/VLDLR that mediate the cellular uptake of the APOE-containing lipoprotein particles. Finally, APOE also has a heparin-binding activity and binds heparan-sulfate proteoglycans on the surface of cells, a property that supports the capture and the receptor-mediated uptake of APOE-containing lipoproteins by cells. A main function of APOE is to mediate lipoprotein clearance through the uptake of chylomicrons, VLDLs, and HDLs by hepatocytes. APOE is also involved in the biosynthesis by the liver of VLDLs as well as their uptake by peripheral tissues ensuring the delivery of triglycerides and energy storage in muscle, heart and adipose tissues. By participating in the lipoprotein-mediated distribution of lipids among tissues, APOE plays a critical role in plasma and tissues lipid homeostasis. APOE is also involved in two steps of reverse cholesterol transport, the HDLs-mediated transport of cholesterol from peripheral tissues to the liver, and thereby plays an important role in cholesterol homeostasis. First, it is functionally associated with ABCA1 in the biogenesis of HDLs in tissues. Second, it is enriched in circulating HDLs and mediates their uptake by hepatocytes. APOE also plays an important role in lipid transport in the central nervous system, regulating neuron survival and sprouting.</text>
</comment>
<comment type="subunit">
    <text evidence="1">Homotetramer. May interact with ABCA1; functionally associated with ABCA1 in the biogenesis of HDLs. May interact with APP/A4 amyloid-beta peptide; the interaction is extremely stable in vitro but its physiological significance is unclear. May interact with MAPT. May interact with MAP2. In the cerebrospinal fluid, interacts with secreted SORL1. Interacts with PMEL; this allows the loading of PMEL luminal fragment on ILVs to induce fibril nucleation.</text>
</comment>
<comment type="subcellular location">
    <subcellularLocation>
        <location evidence="1">Secreted</location>
    </subcellularLocation>
    <subcellularLocation>
        <location evidence="1">Secreted</location>
        <location evidence="1">Extracellular space</location>
    </subcellularLocation>
    <subcellularLocation>
        <location evidence="1">Secreted</location>
        <location evidence="1">Extracellular space</location>
        <location evidence="1">Extracellular matrix</location>
    </subcellularLocation>
    <subcellularLocation>
        <location evidence="1">Extracellular vesicle</location>
    </subcellularLocation>
    <subcellularLocation>
        <location evidence="1">Endosome</location>
        <location evidence="1">Multivesicular body</location>
    </subcellularLocation>
    <text evidence="1">In the plasma, APOE is associated with chylomicrons, chylomicrons remnants, VLDL, LDL and HDL lipoproteins. Lipid poor oligomeric APOE is associated with the extracellular matrix in a calcium- and heparan-sulfate proteoglycans-dependent manner. Lipidation induces the release from the extracellular matrix. Colocalizes with CD63 and PMEL at exosomes and in intraluminal vesicles within multivesicular endosomes.</text>
</comment>
<comment type="PTM">
    <text evidence="1">APOE exists as multiple glycosylated and sialylated glycoforms within cells and in plasma. The extent of glycosylation and sialylation are tissue and context specific.</text>
</comment>
<comment type="PTM">
    <text evidence="1">Glycated in plasma VLDL.</text>
</comment>
<comment type="PTM">
    <text evidence="1">Phosphorylated by FAM20C in the extracellular medium.</text>
</comment>
<comment type="similarity">
    <text evidence="4">Belongs to the apolipoprotein A1/A4/E family.</text>
</comment>
<keyword id="KW-0162">Chylomicron</keyword>
<keyword id="KW-0967">Endosome</keyword>
<keyword id="KW-0272">Extracellular matrix</keyword>
<keyword id="KW-0325">Glycoprotein</keyword>
<keyword id="KW-0345">HDL</keyword>
<keyword id="KW-0358">Heparin-binding</keyword>
<keyword id="KW-0445">Lipid transport</keyword>
<keyword id="KW-0446">Lipid-binding</keyword>
<keyword id="KW-0558">Oxidation</keyword>
<keyword id="KW-0597">Phosphoprotein</keyword>
<keyword id="KW-1185">Reference proteome</keyword>
<keyword id="KW-0677">Repeat</keyword>
<keyword id="KW-0964">Secreted</keyword>
<keyword id="KW-0732">Signal</keyword>
<keyword id="KW-0813">Transport</keyword>
<keyword id="KW-0850">VLDL</keyword>
<dbReference type="EMBL" id="AC151887">
    <property type="status" value="NOT_ANNOTATED_CDS"/>
    <property type="molecule type" value="Genomic_DNA"/>
</dbReference>
<dbReference type="RefSeq" id="XP_010349445.2">
    <property type="nucleotide sequence ID" value="XM_010351143.2"/>
</dbReference>
<dbReference type="SMR" id="P0DKW8"/>
<dbReference type="GeneID" id="101050299"/>
<dbReference type="Proteomes" id="UP000233220">
    <property type="component" value="Whole Genome Shotgun Assembly"/>
</dbReference>
<dbReference type="GO" id="GO:0042627">
    <property type="term" value="C:chylomicron"/>
    <property type="evidence" value="ECO:0007669"/>
    <property type="project" value="UniProtKB-KW"/>
</dbReference>
<dbReference type="GO" id="GO:0070062">
    <property type="term" value="C:extracellular exosome"/>
    <property type="evidence" value="ECO:0000250"/>
    <property type="project" value="UniProtKB"/>
</dbReference>
<dbReference type="GO" id="GO:0031012">
    <property type="term" value="C:extracellular matrix"/>
    <property type="evidence" value="ECO:0000250"/>
    <property type="project" value="UniProtKB"/>
</dbReference>
<dbReference type="GO" id="GO:0005615">
    <property type="term" value="C:extracellular space"/>
    <property type="evidence" value="ECO:0000250"/>
    <property type="project" value="UniProtKB"/>
</dbReference>
<dbReference type="GO" id="GO:0034364">
    <property type="term" value="C:high-density lipoprotein particle"/>
    <property type="evidence" value="ECO:0000250"/>
    <property type="project" value="UniProtKB"/>
</dbReference>
<dbReference type="GO" id="GO:0034363">
    <property type="term" value="C:intermediate-density lipoprotein particle"/>
    <property type="evidence" value="ECO:0000250"/>
    <property type="project" value="UniProtKB"/>
</dbReference>
<dbReference type="GO" id="GO:0034362">
    <property type="term" value="C:low-density lipoprotein particle"/>
    <property type="evidence" value="ECO:0000250"/>
    <property type="project" value="UniProtKB"/>
</dbReference>
<dbReference type="GO" id="GO:0097487">
    <property type="term" value="C:multivesicular body, internal vesicle"/>
    <property type="evidence" value="ECO:0000250"/>
    <property type="project" value="UniProtKB"/>
</dbReference>
<dbReference type="GO" id="GO:0034361">
    <property type="term" value="C:very-low-density lipoprotein particle"/>
    <property type="evidence" value="ECO:0000250"/>
    <property type="project" value="UniProtKB"/>
</dbReference>
<dbReference type="GO" id="GO:0120020">
    <property type="term" value="F:cholesterol transfer activity"/>
    <property type="evidence" value="ECO:0007669"/>
    <property type="project" value="TreeGrafter"/>
</dbReference>
<dbReference type="GO" id="GO:0043395">
    <property type="term" value="F:heparan sulfate proteoglycan binding"/>
    <property type="evidence" value="ECO:0000250"/>
    <property type="project" value="UniProtKB"/>
</dbReference>
<dbReference type="GO" id="GO:0008201">
    <property type="term" value="F:heparin binding"/>
    <property type="evidence" value="ECO:0000250"/>
    <property type="project" value="UniProtKB"/>
</dbReference>
<dbReference type="GO" id="GO:0042802">
    <property type="term" value="F:identical protein binding"/>
    <property type="evidence" value="ECO:0000250"/>
    <property type="project" value="UniProtKB"/>
</dbReference>
<dbReference type="GO" id="GO:0050750">
    <property type="term" value="F:low-density lipoprotein particle receptor binding"/>
    <property type="evidence" value="ECO:0000250"/>
    <property type="project" value="UniProtKB"/>
</dbReference>
<dbReference type="GO" id="GO:0060228">
    <property type="term" value="F:phosphatidylcholine-sterol O-acyltransferase activator activity"/>
    <property type="evidence" value="ECO:0007669"/>
    <property type="project" value="TreeGrafter"/>
</dbReference>
<dbReference type="GO" id="GO:0005543">
    <property type="term" value="F:phospholipid binding"/>
    <property type="evidence" value="ECO:0007669"/>
    <property type="project" value="TreeGrafter"/>
</dbReference>
<dbReference type="GO" id="GO:0055090">
    <property type="term" value="P:acylglycerol homeostasis"/>
    <property type="evidence" value="ECO:0007669"/>
    <property type="project" value="TreeGrafter"/>
</dbReference>
<dbReference type="GO" id="GO:0033344">
    <property type="term" value="P:cholesterol efflux"/>
    <property type="evidence" value="ECO:0000250"/>
    <property type="project" value="UniProtKB"/>
</dbReference>
<dbReference type="GO" id="GO:0008203">
    <property type="term" value="P:cholesterol metabolic process"/>
    <property type="evidence" value="ECO:0007669"/>
    <property type="project" value="TreeGrafter"/>
</dbReference>
<dbReference type="GO" id="GO:0034382">
    <property type="term" value="P:chylomicron remnant clearance"/>
    <property type="evidence" value="ECO:0000250"/>
    <property type="project" value="UniProtKB"/>
</dbReference>
<dbReference type="GO" id="GO:0034380">
    <property type="term" value="P:high-density lipoprotein particle assembly"/>
    <property type="evidence" value="ECO:0000250"/>
    <property type="project" value="UniProtKB"/>
</dbReference>
<dbReference type="GO" id="GO:0071831">
    <property type="term" value="P:intermediate-density lipoprotein particle clearance"/>
    <property type="evidence" value="ECO:0000250"/>
    <property type="project" value="UniProtKB"/>
</dbReference>
<dbReference type="GO" id="GO:0042158">
    <property type="term" value="P:lipoprotein biosynthetic process"/>
    <property type="evidence" value="ECO:0000250"/>
    <property type="project" value="UniProtKB"/>
</dbReference>
<dbReference type="GO" id="GO:0032438">
    <property type="term" value="P:melanosome organization"/>
    <property type="evidence" value="ECO:0000250"/>
    <property type="project" value="UniProtKB"/>
</dbReference>
<dbReference type="GO" id="GO:1905907">
    <property type="term" value="P:negative regulation of amyloid fibril formation"/>
    <property type="evidence" value="ECO:0000250"/>
    <property type="project" value="UniProtKB"/>
</dbReference>
<dbReference type="GO" id="GO:0031175">
    <property type="term" value="P:neuron projection development"/>
    <property type="evidence" value="ECO:0000250"/>
    <property type="project" value="UniProtKB"/>
</dbReference>
<dbReference type="GO" id="GO:0033700">
    <property type="term" value="P:phospholipid efflux"/>
    <property type="evidence" value="ECO:0007669"/>
    <property type="project" value="TreeGrafter"/>
</dbReference>
<dbReference type="GO" id="GO:1900223">
    <property type="term" value="P:positive regulation of amyloid-beta clearance"/>
    <property type="evidence" value="ECO:0000250"/>
    <property type="project" value="UniProtKB"/>
</dbReference>
<dbReference type="GO" id="GO:0071830">
    <property type="term" value="P:triglyceride-rich lipoprotein particle clearance"/>
    <property type="evidence" value="ECO:0000250"/>
    <property type="project" value="UniProtKB"/>
</dbReference>
<dbReference type="GO" id="GO:0034447">
    <property type="term" value="P:very-low-density lipoprotein particle clearance"/>
    <property type="evidence" value="ECO:0000250"/>
    <property type="project" value="UniProtKB"/>
</dbReference>
<dbReference type="FunFam" id="1.20.120.20:FF:000002">
    <property type="entry name" value="Apolipoprotein E"/>
    <property type="match status" value="1"/>
</dbReference>
<dbReference type="FunFam" id="1.20.120.20:FF:000003">
    <property type="entry name" value="Apolipoprotein E"/>
    <property type="match status" value="1"/>
</dbReference>
<dbReference type="Gene3D" id="1.20.120.20">
    <property type="entry name" value="Apolipoprotein"/>
    <property type="match status" value="2"/>
</dbReference>
<dbReference type="InterPro" id="IPR000074">
    <property type="entry name" value="ApoA_E"/>
</dbReference>
<dbReference type="InterPro" id="IPR050163">
    <property type="entry name" value="Apolipoprotein_A1/A4/E"/>
</dbReference>
<dbReference type="PANTHER" id="PTHR18976">
    <property type="entry name" value="APOLIPOPROTEIN"/>
    <property type="match status" value="1"/>
</dbReference>
<dbReference type="PANTHER" id="PTHR18976:SF2">
    <property type="entry name" value="APOLIPOPROTEIN E"/>
    <property type="match status" value="1"/>
</dbReference>
<dbReference type="Pfam" id="PF01442">
    <property type="entry name" value="Apolipoprotein"/>
    <property type="match status" value="1"/>
</dbReference>
<dbReference type="SUPFAM" id="SSF58113">
    <property type="entry name" value="Apolipoprotein A-I"/>
    <property type="match status" value="1"/>
</dbReference>
<gene>
    <name type="primary">APOE</name>
</gene>
<organism>
    <name type="scientific">Saimiri boliviensis boliviensis</name>
    <name type="common">Bolivian squirrel monkey</name>
    <dbReference type="NCBI Taxonomy" id="39432"/>
    <lineage>
        <taxon>Eukaryota</taxon>
        <taxon>Metazoa</taxon>
        <taxon>Chordata</taxon>
        <taxon>Craniata</taxon>
        <taxon>Vertebrata</taxon>
        <taxon>Euteleostomi</taxon>
        <taxon>Mammalia</taxon>
        <taxon>Eutheria</taxon>
        <taxon>Euarchontoglires</taxon>
        <taxon>Primates</taxon>
        <taxon>Haplorrhini</taxon>
        <taxon>Platyrrhini</taxon>
        <taxon>Cebidae</taxon>
        <taxon>Saimiriinae</taxon>
        <taxon>Saimiri</taxon>
    </lineage>
</organism>
<reference key="1">
    <citation type="submission" date="2011-10" db="EMBL/GenBank/DDBJ databases">
        <title>The Draft Genome of Saimiri boliviensis.</title>
        <authorList>
            <person name="Di Palma F."/>
            <person name="Alfoldi J."/>
            <person name="Johnson J."/>
            <person name="Berlin A."/>
            <person name="Gnerre S."/>
            <person name="Jaffe D."/>
            <person name="MacCallum I."/>
            <person name="Young S."/>
            <person name="Walker B.J."/>
            <person name="Lindblad-Toh K."/>
        </authorList>
    </citation>
    <scope>NUCLEOTIDE SEQUENCE [LARGE SCALE GENOMIC DNA]</scope>
</reference>
<reference key="2">
    <citation type="unpublished observations" date="2012-11">
        <authorList>
            <person name="Puppione D.L."/>
        </authorList>
    </citation>
    <scope>IDENTIFICATION</scope>
</reference>
<accession>P0DKW8</accession>
<accession>A0A2K6UUS0</accession>
<proteinExistence type="inferred from homology"/>
<sequence length="320" mass="36306">MKVLWAAFLVAFLAGCQGKVEQVVEPELGPEPELHPQADWQSGQPWELALGRFWDYLRWVQTLSEQVQEELLSSQVTQELTALMDETMKELKAYKSELEEQLSPVAEETRARLSKELQAAQARLGADMEDVRSRLAQYRSEVQAMLGQSTDELRARLASHLRKLRKRLLRDVDDLQKRLAVYQAGAREGAERGVSAIRERLGPLVEQGRARAATVGSSLASQPLQERAQAWGERLRARMEEVGSRTRDRLDEVKEQVEEVRAKLEEQAQQMRLQAEAFQARLKSWFEPLVEDMQRQWAGLVEKVQAAVGASATPVPSDNH</sequence>